<gene>
    <name evidence="1" type="primary">glmM</name>
    <name type="ordered locus">P9515_02741</name>
</gene>
<reference key="1">
    <citation type="journal article" date="2007" name="PLoS Genet.">
        <title>Patterns and implications of gene gain and loss in the evolution of Prochlorococcus.</title>
        <authorList>
            <person name="Kettler G.C."/>
            <person name="Martiny A.C."/>
            <person name="Huang K."/>
            <person name="Zucker J."/>
            <person name="Coleman M.L."/>
            <person name="Rodrigue S."/>
            <person name="Chen F."/>
            <person name="Lapidus A."/>
            <person name="Ferriera S."/>
            <person name="Johnson J."/>
            <person name="Steglich C."/>
            <person name="Church G.M."/>
            <person name="Richardson P."/>
            <person name="Chisholm S.W."/>
        </authorList>
    </citation>
    <scope>NUCLEOTIDE SEQUENCE [LARGE SCALE GENOMIC DNA]</scope>
    <source>
        <strain>MIT 9515</strain>
    </source>
</reference>
<accession>A2BUM2</accession>
<protein>
    <recommendedName>
        <fullName evidence="1">Phosphoglucosamine mutase</fullName>
        <ecNumber evidence="1">5.4.2.10</ecNumber>
    </recommendedName>
</protein>
<dbReference type="EC" id="5.4.2.10" evidence="1"/>
<dbReference type="EMBL" id="CP000552">
    <property type="protein sequence ID" value="ABM71483.1"/>
    <property type="molecule type" value="Genomic_DNA"/>
</dbReference>
<dbReference type="RefSeq" id="WP_011819595.1">
    <property type="nucleotide sequence ID" value="NC_008817.1"/>
</dbReference>
<dbReference type="SMR" id="A2BUM2"/>
<dbReference type="STRING" id="167542.P9515_02741"/>
<dbReference type="GeneID" id="60200433"/>
<dbReference type="KEGG" id="pmc:P9515_02741"/>
<dbReference type="eggNOG" id="COG1109">
    <property type="taxonomic scope" value="Bacteria"/>
</dbReference>
<dbReference type="HOGENOM" id="CLU_016950_7_0_3"/>
<dbReference type="OrthoDB" id="9806956at2"/>
<dbReference type="Proteomes" id="UP000001589">
    <property type="component" value="Chromosome"/>
</dbReference>
<dbReference type="GO" id="GO:0005829">
    <property type="term" value="C:cytosol"/>
    <property type="evidence" value="ECO:0007669"/>
    <property type="project" value="TreeGrafter"/>
</dbReference>
<dbReference type="GO" id="GO:0000287">
    <property type="term" value="F:magnesium ion binding"/>
    <property type="evidence" value="ECO:0007669"/>
    <property type="project" value="UniProtKB-UniRule"/>
</dbReference>
<dbReference type="GO" id="GO:0008966">
    <property type="term" value="F:phosphoglucosamine mutase activity"/>
    <property type="evidence" value="ECO:0007669"/>
    <property type="project" value="UniProtKB-UniRule"/>
</dbReference>
<dbReference type="GO" id="GO:0004615">
    <property type="term" value="F:phosphomannomutase activity"/>
    <property type="evidence" value="ECO:0007669"/>
    <property type="project" value="TreeGrafter"/>
</dbReference>
<dbReference type="GO" id="GO:0005975">
    <property type="term" value="P:carbohydrate metabolic process"/>
    <property type="evidence" value="ECO:0007669"/>
    <property type="project" value="InterPro"/>
</dbReference>
<dbReference type="GO" id="GO:0009252">
    <property type="term" value="P:peptidoglycan biosynthetic process"/>
    <property type="evidence" value="ECO:0007669"/>
    <property type="project" value="TreeGrafter"/>
</dbReference>
<dbReference type="GO" id="GO:0006048">
    <property type="term" value="P:UDP-N-acetylglucosamine biosynthetic process"/>
    <property type="evidence" value="ECO:0007669"/>
    <property type="project" value="TreeGrafter"/>
</dbReference>
<dbReference type="FunFam" id="3.40.120.10:FF:000001">
    <property type="entry name" value="Phosphoglucosamine mutase"/>
    <property type="match status" value="1"/>
</dbReference>
<dbReference type="Gene3D" id="3.40.120.10">
    <property type="entry name" value="Alpha-D-Glucose-1,6-Bisphosphate, subunit A, domain 3"/>
    <property type="match status" value="3"/>
</dbReference>
<dbReference type="Gene3D" id="3.30.310.50">
    <property type="entry name" value="Alpha-D-phosphohexomutase, C-terminal domain"/>
    <property type="match status" value="1"/>
</dbReference>
<dbReference type="HAMAP" id="MF_01554_B">
    <property type="entry name" value="GlmM_B"/>
    <property type="match status" value="1"/>
</dbReference>
<dbReference type="InterPro" id="IPR005844">
    <property type="entry name" value="A-D-PHexomutase_a/b/a-I"/>
</dbReference>
<dbReference type="InterPro" id="IPR016055">
    <property type="entry name" value="A-D-PHexomutase_a/b/a-I/II/III"/>
</dbReference>
<dbReference type="InterPro" id="IPR005845">
    <property type="entry name" value="A-D-PHexomutase_a/b/a-II"/>
</dbReference>
<dbReference type="InterPro" id="IPR005846">
    <property type="entry name" value="A-D-PHexomutase_a/b/a-III"/>
</dbReference>
<dbReference type="InterPro" id="IPR005843">
    <property type="entry name" value="A-D-PHexomutase_C"/>
</dbReference>
<dbReference type="InterPro" id="IPR036900">
    <property type="entry name" value="A-D-PHexomutase_C_sf"/>
</dbReference>
<dbReference type="InterPro" id="IPR016066">
    <property type="entry name" value="A-D-PHexomutase_CS"/>
</dbReference>
<dbReference type="InterPro" id="IPR005841">
    <property type="entry name" value="Alpha-D-phosphohexomutase_SF"/>
</dbReference>
<dbReference type="InterPro" id="IPR006352">
    <property type="entry name" value="GlmM_bact"/>
</dbReference>
<dbReference type="InterPro" id="IPR050060">
    <property type="entry name" value="Phosphoglucosamine_mutase"/>
</dbReference>
<dbReference type="PANTHER" id="PTHR42946:SF1">
    <property type="entry name" value="PHOSPHOGLUCOMUTASE (ALPHA-D-GLUCOSE-1,6-BISPHOSPHATE-DEPENDENT)"/>
    <property type="match status" value="1"/>
</dbReference>
<dbReference type="PANTHER" id="PTHR42946">
    <property type="entry name" value="PHOSPHOHEXOSE MUTASE"/>
    <property type="match status" value="1"/>
</dbReference>
<dbReference type="Pfam" id="PF02878">
    <property type="entry name" value="PGM_PMM_I"/>
    <property type="match status" value="1"/>
</dbReference>
<dbReference type="Pfam" id="PF02879">
    <property type="entry name" value="PGM_PMM_II"/>
    <property type="match status" value="1"/>
</dbReference>
<dbReference type="Pfam" id="PF02880">
    <property type="entry name" value="PGM_PMM_III"/>
    <property type="match status" value="1"/>
</dbReference>
<dbReference type="Pfam" id="PF00408">
    <property type="entry name" value="PGM_PMM_IV"/>
    <property type="match status" value="1"/>
</dbReference>
<dbReference type="PRINTS" id="PR00509">
    <property type="entry name" value="PGMPMM"/>
</dbReference>
<dbReference type="SUPFAM" id="SSF55957">
    <property type="entry name" value="Phosphoglucomutase, C-terminal domain"/>
    <property type="match status" value="1"/>
</dbReference>
<dbReference type="SUPFAM" id="SSF53738">
    <property type="entry name" value="Phosphoglucomutase, first 3 domains"/>
    <property type="match status" value="3"/>
</dbReference>
<dbReference type="PROSITE" id="PS00710">
    <property type="entry name" value="PGM_PMM"/>
    <property type="match status" value="1"/>
</dbReference>
<organism>
    <name type="scientific">Prochlorococcus marinus (strain MIT 9515)</name>
    <dbReference type="NCBI Taxonomy" id="167542"/>
    <lineage>
        <taxon>Bacteria</taxon>
        <taxon>Bacillati</taxon>
        <taxon>Cyanobacteriota</taxon>
        <taxon>Cyanophyceae</taxon>
        <taxon>Synechococcales</taxon>
        <taxon>Prochlorococcaceae</taxon>
        <taxon>Prochlorococcus</taxon>
    </lineage>
</organism>
<comment type="function">
    <text evidence="1">Catalyzes the conversion of glucosamine-6-phosphate to glucosamine-1-phosphate.</text>
</comment>
<comment type="catalytic activity">
    <reaction evidence="1">
        <text>alpha-D-glucosamine 1-phosphate = D-glucosamine 6-phosphate</text>
        <dbReference type="Rhea" id="RHEA:23424"/>
        <dbReference type="ChEBI" id="CHEBI:58516"/>
        <dbReference type="ChEBI" id="CHEBI:58725"/>
        <dbReference type="EC" id="5.4.2.10"/>
    </reaction>
</comment>
<comment type="cofactor">
    <cofactor evidence="1">
        <name>Mg(2+)</name>
        <dbReference type="ChEBI" id="CHEBI:18420"/>
    </cofactor>
    <text evidence="1">Binds 1 Mg(2+) ion per subunit.</text>
</comment>
<comment type="PTM">
    <text evidence="1">Activated by phosphorylation.</text>
</comment>
<comment type="similarity">
    <text evidence="1">Belongs to the phosphohexose mutase family.</text>
</comment>
<sequence>MQSIFGTDGIRGRFDKEITYSLAYKVGYALGFIVKTNNPILIGRDTRISGEILFEAISKGIKDAGKEFIYLGICPTPAIPFLIKKEKFSSGIMISASHNPPEFNGIKIFDKNGEKIKRDFEKRIELIMARVDNNKIITNKYKSVSKNNELLNIYTKGLIDSMENENLEGMKIILDACYGSATTCAESVFKKLGANVKVINNDKDGLKINLNCGSTCLDPLNKAIKENDADMGFSFDGDADRVIGVDSKGNILDGDHILFLWGRELLEEKVLTNNTIISTRMANLGFERNWNNIGGILYRTEVGDKFIFAALKEKKALLGGEQSGHILSKINNFCGDGILTALQISKYCKKKNINLESWLNSSFLPYPQKLTNILLSFDFKNINNSNKDLINESIESFSSIKKNDCRVYIRPSGTEPVLRILVEAQNQKEVDFLSTKITTELRSKINKISNNL</sequence>
<proteinExistence type="inferred from homology"/>
<evidence type="ECO:0000255" key="1">
    <source>
        <dbReference type="HAMAP-Rule" id="MF_01554"/>
    </source>
</evidence>
<feature type="chain" id="PRO_0000305663" description="Phosphoglucosamine mutase">
    <location>
        <begin position="1"/>
        <end position="452"/>
    </location>
</feature>
<feature type="active site" description="Phosphoserine intermediate" evidence="1">
    <location>
        <position position="97"/>
    </location>
</feature>
<feature type="binding site" description="via phosphate group" evidence="1">
    <location>
        <position position="97"/>
    </location>
    <ligand>
        <name>Mg(2+)</name>
        <dbReference type="ChEBI" id="CHEBI:18420"/>
    </ligand>
</feature>
<feature type="binding site" evidence="1">
    <location>
        <position position="236"/>
    </location>
    <ligand>
        <name>Mg(2+)</name>
        <dbReference type="ChEBI" id="CHEBI:18420"/>
    </ligand>
</feature>
<feature type="binding site" evidence="1">
    <location>
        <position position="238"/>
    </location>
    <ligand>
        <name>Mg(2+)</name>
        <dbReference type="ChEBI" id="CHEBI:18420"/>
    </ligand>
</feature>
<feature type="binding site" evidence="1">
    <location>
        <position position="240"/>
    </location>
    <ligand>
        <name>Mg(2+)</name>
        <dbReference type="ChEBI" id="CHEBI:18420"/>
    </ligand>
</feature>
<feature type="modified residue" description="Phosphoserine" evidence="1">
    <location>
        <position position="97"/>
    </location>
</feature>
<name>GLMM_PROM5</name>
<keyword id="KW-0413">Isomerase</keyword>
<keyword id="KW-0460">Magnesium</keyword>
<keyword id="KW-0479">Metal-binding</keyword>
<keyword id="KW-0597">Phosphoprotein</keyword>